<comment type="function">
    <text evidence="2">Component of the ubiquinol-cytochrome c reductase complex (complex III or cytochrome b-c1 complex) that is part of the mitochondrial respiratory chain. The b-c1 complex mediates electron transfer from ubiquinol to cytochrome c. Contributes to the generation of a proton gradient across the mitochondrial membrane that is then used for ATP synthesis.</text>
</comment>
<comment type="cofactor">
    <cofactor evidence="2">
        <name>heme b</name>
        <dbReference type="ChEBI" id="CHEBI:60344"/>
    </cofactor>
    <text evidence="2">Binds 2 heme b groups non-covalently.</text>
</comment>
<comment type="subunit">
    <text evidence="2">The cytochrome bc1 complex contains 11 subunits: 3 respiratory subunits (MT-CYB, CYC1 and UQCRFS1), 2 core proteins (UQCRC1 and UQCRC2) and 6 low-molecular weight proteins (UQCRH/QCR6, UQCRB/QCR7, UQCRQ/QCR8, UQCR10/QCR9, UQCR11/QCR10 and a cleavage product of UQCRFS1). This cytochrome bc1 complex then forms a dimer.</text>
</comment>
<comment type="subcellular location">
    <subcellularLocation>
        <location evidence="2">Mitochondrion inner membrane</location>
        <topology evidence="2">Multi-pass membrane protein</topology>
    </subcellularLocation>
</comment>
<comment type="miscellaneous">
    <text evidence="1">Heme 1 (or BL or b562) is low-potential and absorbs at about 562 nm, and heme 2 (or BH or b566) is high-potential and absorbs at about 566 nm.</text>
</comment>
<comment type="similarity">
    <text evidence="3 4">Belongs to the cytochrome b family.</text>
</comment>
<comment type="caution">
    <text evidence="2">The full-length protein contains only eight transmembrane helices, not nine as predicted by bioinformatics tools.</text>
</comment>
<accession>Q951T6</accession>
<gene>
    <name type="primary">MT-CYB</name>
    <name type="synonym">COB</name>
    <name type="synonym">CYTB</name>
    <name type="synonym">MTCYB</name>
</gene>
<evidence type="ECO:0000250" key="1"/>
<evidence type="ECO:0000250" key="2">
    <source>
        <dbReference type="UniProtKB" id="P00157"/>
    </source>
</evidence>
<evidence type="ECO:0000255" key="3">
    <source>
        <dbReference type="PROSITE-ProRule" id="PRU00967"/>
    </source>
</evidence>
<evidence type="ECO:0000255" key="4">
    <source>
        <dbReference type="PROSITE-ProRule" id="PRU00968"/>
    </source>
</evidence>
<feature type="chain" id="PRO_0000060670" description="Cytochrome b">
    <location>
        <begin position="1"/>
        <end position="380"/>
    </location>
</feature>
<feature type="transmembrane region" description="Helical" evidence="2">
    <location>
        <begin position="34"/>
        <end position="54"/>
    </location>
</feature>
<feature type="transmembrane region" description="Helical" evidence="2">
    <location>
        <begin position="78"/>
        <end position="99"/>
    </location>
</feature>
<feature type="transmembrane region" description="Helical" evidence="2">
    <location>
        <begin position="114"/>
        <end position="134"/>
    </location>
</feature>
<feature type="transmembrane region" description="Helical" evidence="2">
    <location>
        <begin position="179"/>
        <end position="199"/>
    </location>
</feature>
<feature type="transmembrane region" description="Helical" evidence="2">
    <location>
        <begin position="227"/>
        <end position="247"/>
    </location>
</feature>
<feature type="transmembrane region" description="Helical" evidence="2">
    <location>
        <begin position="289"/>
        <end position="309"/>
    </location>
</feature>
<feature type="transmembrane region" description="Helical" evidence="2">
    <location>
        <begin position="321"/>
        <end position="341"/>
    </location>
</feature>
<feature type="transmembrane region" description="Helical" evidence="2">
    <location>
        <begin position="348"/>
        <end position="368"/>
    </location>
</feature>
<feature type="binding site" description="axial binding residue" evidence="2">
    <location>
        <position position="84"/>
    </location>
    <ligand>
        <name>heme b</name>
        <dbReference type="ChEBI" id="CHEBI:60344"/>
        <label>b562</label>
    </ligand>
    <ligandPart>
        <name>Fe</name>
        <dbReference type="ChEBI" id="CHEBI:18248"/>
    </ligandPart>
</feature>
<feature type="binding site" description="axial binding residue" evidence="2">
    <location>
        <position position="98"/>
    </location>
    <ligand>
        <name>heme b</name>
        <dbReference type="ChEBI" id="CHEBI:60344"/>
        <label>b566</label>
    </ligand>
    <ligandPart>
        <name>Fe</name>
        <dbReference type="ChEBI" id="CHEBI:18248"/>
    </ligandPart>
</feature>
<feature type="binding site" description="axial binding residue" evidence="2">
    <location>
        <position position="183"/>
    </location>
    <ligand>
        <name>heme b</name>
        <dbReference type="ChEBI" id="CHEBI:60344"/>
        <label>b562</label>
    </ligand>
    <ligandPart>
        <name>Fe</name>
        <dbReference type="ChEBI" id="CHEBI:18248"/>
    </ligandPart>
</feature>
<feature type="binding site" description="axial binding residue" evidence="2">
    <location>
        <position position="197"/>
    </location>
    <ligand>
        <name>heme b</name>
        <dbReference type="ChEBI" id="CHEBI:60344"/>
        <label>b566</label>
    </ligand>
    <ligandPart>
        <name>Fe</name>
        <dbReference type="ChEBI" id="CHEBI:18248"/>
    </ligandPart>
</feature>
<feature type="binding site" evidence="2">
    <location>
        <position position="202"/>
    </location>
    <ligand>
        <name>a ubiquinone</name>
        <dbReference type="ChEBI" id="CHEBI:16389"/>
    </ligand>
</feature>
<name>CYB_BASCU</name>
<proteinExistence type="inferred from homology"/>
<reference key="1">
    <citation type="submission" date="2001-05" db="EMBL/GenBank/DDBJ databases">
        <title>Phylogenetic relationships in the nine-primaried oscines and the molecular characterization of a monophyletic Parulidae.</title>
        <authorList>
            <person name="Lovette I.J."/>
            <person name="Bermingham E."/>
        </authorList>
    </citation>
    <scope>NUCLEOTIDE SEQUENCE [GENOMIC DNA]</scope>
</reference>
<organism>
    <name type="scientific">Basileuterus culicivorus</name>
    <name type="common">Golden-crowned warbler</name>
    <dbReference type="NCBI Taxonomy" id="85526"/>
    <lineage>
        <taxon>Eukaryota</taxon>
        <taxon>Metazoa</taxon>
        <taxon>Chordata</taxon>
        <taxon>Craniata</taxon>
        <taxon>Vertebrata</taxon>
        <taxon>Euteleostomi</taxon>
        <taxon>Archelosauria</taxon>
        <taxon>Archosauria</taxon>
        <taxon>Dinosauria</taxon>
        <taxon>Saurischia</taxon>
        <taxon>Theropoda</taxon>
        <taxon>Coelurosauria</taxon>
        <taxon>Aves</taxon>
        <taxon>Neognathae</taxon>
        <taxon>Neoaves</taxon>
        <taxon>Telluraves</taxon>
        <taxon>Australaves</taxon>
        <taxon>Passeriformes</taxon>
        <taxon>Passeroidea</taxon>
        <taxon>Parulidae</taxon>
        <taxon>Basileuterus</taxon>
    </lineage>
</organism>
<geneLocation type="mitochondrion"/>
<keyword id="KW-0249">Electron transport</keyword>
<keyword id="KW-0349">Heme</keyword>
<keyword id="KW-0408">Iron</keyword>
<keyword id="KW-0472">Membrane</keyword>
<keyword id="KW-0479">Metal-binding</keyword>
<keyword id="KW-0496">Mitochondrion</keyword>
<keyword id="KW-0999">Mitochondrion inner membrane</keyword>
<keyword id="KW-0679">Respiratory chain</keyword>
<keyword id="KW-0812">Transmembrane</keyword>
<keyword id="KW-1133">Transmembrane helix</keyword>
<keyword id="KW-0813">Transport</keyword>
<keyword id="KW-0830">Ubiquinone</keyword>
<dbReference type="EMBL" id="AF383106">
    <property type="protein sequence ID" value="AAK63836.1"/>
    <property type="molecule type" value="Genomic_DNA"/>
</dbReference>
<dbReference type="SMR" id="Q951T6"/>
<dbReference type="GO" id="GO:0005743">
    <property type="term" value="C:mitochondrial inner membrane"/>
    <property type="evidence" value="ECO:0007669"/>
    <property type="project" value="UniProtKB-SubCell"/>
</dbReference>
<dbReference type="GO" id="GO:0045275">
    <property type="term" value="C:respiratory chain complex III"/>
    <property type="evidence" value="ECO:0007669"/>
    <property type="project" value="InterPro"/>
</dbReference>
<dbReference type="GO" id="GO:0046872">
    <property type="term" value="F:metal ion binding"/>
    <property type="evidence" value="ECO:0007669"/>
    <property type="project" value="UniProtKB-KW"/>
</dbReference>
<dbReference type="GO" id="GO:0008121">
    <property type="term" value="F:ubiquinol-cytochrome-c reductase activity"/>
    <property type="evidence" value="ECO:0007669"/>
    <property type="project" value="InterPro"/>
</dbReference>
<dbReference type="GO" id="GO:0006122">
    <property type="term" value="P:mitochondrial electron transport, ubiquinol to cytochrome c"/>
    <property type="evidence" value="ECO:0007669"/>
    <property type="project" value="TreeGrafter"/>
</dbReference>
<dbReference type="CDD" id="cd00290">
    <property type="entry name" value="cytochrome_b_C"/>
    <property type="match status" value="1"/>
</dbReference>
<dbReference type="CDD" id="cd00284">
    <property type="entry name" value="Cytochrome_b_N"/>
    <property type="match status" value="1"/>
</dbReference>
<dbReference type="FunFam" id="1.20.810.10:FF:000002">
    <property type="entry name" value="Cytochrome b"/>
    <property type="match status" value="1"/>
</dbReference>
<dbReference type="Gene3D" id="1.20.810.10">
    <property type="entry name" value="Cytochrome Bc1 Complex, Chain C"/>
    <property type="match status" value="1"/>
</dbReference>
<dbReference type="InterPro" id="IPR005798">
    <property type="entry name" value="Cyt_b/b6_C"/>
</dbReference>
<dbReference type="InterPro" id="IPR036150">
    <property type="entry name" value="Cyt_b/b6_C_sf"/>
</dbReference>
<dbReference type="InterPro" id="IPR005797">
    <property type="entry name" value="Cyt_b/b6_N"/>
</dbReference>
<dbReference type="InterPro" id="IPR027387">
    <property type="entry name" value="Cytb/b6-like_sf"/>
</dbReference>
<dbReference type="InterPro" id="IPR030689">
    <property type="entry name" value="Cytochrome_b"/>
</dbReference>
<dbReference type="InterPro" id="IPR048260">
    <property type="entry name" value="Cytochrome_b_C_euk/bac"/>
</dbReference>
<dbReference type="InterPro" id="IPR048259">
    <property type="entry name" value="Cytochrome_b_N_euk/bac"/>
</dbReference>
<dbReference type="InterPro" id="IPR016174">
    <property type="entry name" value="Di-haem_cyt_TM"/>
</dbReference>
<dbReference type="PANTHER" id="PTHR19271">
    <property type="entry name" value="CYTOCHROME B"/>
    <property type="match status" value="1"/>
</dbReference>
<dbReference type="PANTHER" id="PTHR19271:SF16">
    <property type="entry name" value="CYTOCHROME B"/>
    <property type="match status" value="1"/>
</dbReference>
<dbReference type="Pfam" id="PF00032">
    <property type="entry name" value="Cytochrom_B_C"/>
    <property type="match status" value="1"/>
</dbReference>
<dbReference type="Pfam" id="PF00033">
    <property type="entry name" value="Cytochrome_B"/>
    <property type="match status" value="1"/>
</dbReference>
<dbReference type="PIRSF" id="PIRSF038885">
    <property type="entry name" value="COB"/>
    <property type="match status" value="1"/>
</dbReference>
<dbReference type="SUPFAM" id="SSF81648">
    <property type="entry name" value="a domain/subunit of cytochrome bc1 complex (Ubiquinol-cytochrome c reductase)"/>
    <property type="match status" value="1"/>
</dbReference>
<dbReference type="SUPFAM" id="SSF81342">
    <property type="entry name" value="Transmembrane di-heme cytochromes"/>
    <property type="match status" value="1"/>
</dbReference>
<dbReference type="PROSITE" id="PS51003">
    <property type="entry name" value="CYTB_CTER"/>
    <property type="match status" value="1"/>
</dbReference>
<dbReference type="PROSITE" id="PS51002">
    <property type="entry name" value="CYTB_NTER"/>
    <property type="match status" value="1"/>
</dbReference>
<protein>
    <recommendedName>
        <fullName>Cytochrome b</fullName>
    </recommendedName>
    <alternativeName>
        <fullName>Complex III subunit 3</fullName>
    </alternativeName>
    <alternativeName>
        <fullName>Complex III subunit III</fullName>
    </alternativeName>
    <alternativeName>
        <fullName>Cytochrome b-c1 complex subunit 3</fullName>
    </alternativeName>
    <alternativeName>
        <fullName>Ubiquinol-cytochrome-c reductase complex cytochrome b subunit</fullName>
    </alternativeName>
</protein>
<sequence length="380" mass="42390">MALNLRKNHQILKIINDALIDLPAPSNISTWWNFGSLLGICLITQIVTGLLLAMHYTADTSLAFSSVAHMCRDVQFGWLIRNLHANGASFFFICIYLHIGRGLYYGSYLNKETWNVGVLLLLALMATAFVGYVLPWGQMSFWGATVITNLFSAIPYIGQTLVEWAWGGFSVDNPTLTRFFALHFLLPFVIVGLTLVHLTFLHETGSNNPLGIPSDCDKIPFHPYYTIKDILGFVLMLSLLVSLALFAPNLLGDPENFTPANPLVTPPHIKPEWYFLFAYAILRSIPNKLGGVLALAASILVLFLTPLLHTSKLRSMTFRPLSQILFWTLVANVLILTWVGSQPVEHPFIIIGQLASFTYFTIILILFPLAAALENKLLKL</sequence>